<comment type="function">
    <text evidence="2">Responsible for the proteolytic processing of the amyloid precursor protein (APP). Cleaves APP, between residues 690 and 691, leading to the generation and extracellular release of beta-cleaved soluble APP, and a corresponding cell-associated C-terminal fragment which is later released by gamma-secretase. It has also been shown that it can cleave APP between residues 671 and 672. Involved in the proteolytic shedding of PMEL at early stages of melanosome biogenesis. Cleaves PMEL within the M-beta fragment to release the amyloidogenic PMEL luminal fragment containing M-alpha and a small portion of M-beta N-terminus. This is a prerequisite step for subsequent processing and assembly of PMEL fibrils into amyloid sheets. Responsible also for the proteolytic processing of CLTRN in pancreatic beta cells.</text>
</comment>
<comment type="catalytic activity">
    <reaction evidence="2">
        <text>Broad endopeptidase specificity. Cleaves Glu-Val-Asn-Leu-|-Asp-Ala-Glu-Phe in the Swedish variant of Alzheimer's amyloid precursor protein.</text>
        <dbReference type="EC" id="3.4.23.45"/>
    </reaction>
</comment>
<comment type="subunit">
    <text evidence="2">Monomer. Interacts with RTN3 and RTN4.</text>
</comment>
<comment type="subcellular location">
    <subcellularLocation>
        <location evidence="2">Cell membrane</location>
        <topology evidence="3">Single-pass type I membrane protein</topology>
    </subcellularLocation>
    <subcellularLocation>
        <location evidence="2">Golgi apparatus</location>
    </subcellularLocation>
    <subcellularLocation>
        <location evidence="2">Endoplasmic reticulum</location>
    </subcellularLocation>
    <subcellularLocation>
        <location evidence="2">Endosome</location>
    </subcellularLocation>
    <subcellularLocation>
        <location evidence="2">Melanosome</location>
    </subcellularLocation>
    <text evidence="2">Colocalizes with PMEL in stage I and II melanosomes.</text>
</comment>
<comment type="PTM">
    <text evidence="2">Undergoes autoproteolytic cleavage.</text>
</comment>
<comment type="PTM">
    <text evidence="2">Glycosylated.</text>
</comment>
<comment type="similarity">
    <text evidence="6">Belongs to the peptidase A1 family.</text>
</comment>
<organism>
    <name type="scientific">Rattus norvegicus</name>
    <name type="common">Rat</name>
    <dbReference type="NCBI Taxonomy" id="10116"/>
    <lineage>
        <taxon>Eukaryota</taxon>
        <taxon>Metazoa</taxon>
        <taxon>Chordata</taxon>
        <taxon>Craniata</taxon>
        <taxon>Vertebrata</taxon>
        <taxon>Euteleostomi</taxon>
        <taxon>Mammalia</taxon>
        <taxon>Eutheria</taxon>
        <taxon>Euarchontoglires</taxon>
        <taxon>Glires</taxon>
        <taxon>Rodentia</taxon>
        <taxon>Myomorpha</taxon>
        <taxon>Muroidea</taxon>
        <taxon>Muridae</taxon>
        <taxon>Murinae</taxon>
        <taxon>Rattus</taxon>
    </lineage>
</organism>
<evidence type="ECO:0000250" key="1"/>
<evidence type="ECO:0000250" key="2">
    <source>
        <dbReference type="UniProtKB" id="Q9Y5Z0"/>
    </source>
</evidence>
<evidence type="ECO:0000255" key="3"/>
<evidence type="ECO:0000255" key="4">
    <source>
        <dbReference type="PROSITE-ProRule" id="PRU01103"/>
    </source>
</evidence>
<evidence type="ECO:0000255" key="5">
    <source>
        <dbReference type="PROSITE-ProRule" id="PRU10094"/>
    </source>
</evidence>
<evidence type="ECO:0000305" key="6"/>
<dbReference type="EC" id="3.4.23.45" evidence="2"/>
<dbReference type="EMBL" id="BC166597">
    <property type="protein sequence ID" value="AAI66597.1"/>
    <property type="molecule type" value="mRNA"/>
</dbReference>
<dbReference type="EMBL" id="BN000318">
    <property type="protein sequence ID" value="CAE48373.1"/>
    <property type="molecule type" value="mRNA"/>
</dbReference>
<dbReference type="RefSeq" id="NP_001002802.1">
    <property type="nucleotide sequence ID" value="NM_001002802.2"/>
</dbReference>
<dbReference type="SMR" id="Q6IE75"/>
<dbReference type="FunCoup" id="Q6IE75">
    <property type="interactions" value="56"/>
</dbReference>
<dbReference type="STRING" id="10116.ENSRNOP00000002679"/>
<dbReference type="BindingDB" id="Q6IE75"/>
<dbReference type="ChEMBL" id="CHEMBL2331066"/>
<dbReference type="MEROPS" id="A01.041"/>
<dbReference type="GlyCosmos" id="Q6IE75">
    <property type="glycosylation" value="2 sites, No reported glycans"/>
</dbReference>
<dbReference type="GlyGen" id="Q6IE75">
    <property type="glycosylation" value="2 sites"/>
</dbReference>
<dbReference type="PhosphoSitePlus" id="Q6IE75"/>
<dbReference type="PaxDb" id="10116-ENSRNOP00000002679"/>
<dbReference type="Ensembl" id="ENSRNOT00000002679.8">
    <property type="protein sequence ID" value="ENSRNOP00000002679.4"/>
    <property type="gene ID" value="ENSRNOG00000001953.8"/>
</dbReference>
<dbReference type="GeneID" id="288227"/>
<dbReference type="KEGG" id="rno:288227"/>
<dbReference type="UCSC" id="RGD:1303241">
    <property type="organism name" value="rat"/>
</dbReference>
<dbReference type="AGR" id="RGD:1303241"/>
<dbReference type="CTD" id="25825"/>
<dbReference type="RGD" id="1303241">
    <property type="gene designation" value="Bace2"/>
</dbReference>
<dbReference type="eggNOG" id="KOG1339">
    <property type="taxonomic scope" value="Eukaryota"/>
</dbReference>
<dbReference type="GeneTree" id="ENSGT00940000159548"/>
<dbReference type="HOGENOM" id="CLU_039009_0_0_1"/>
<dbReference type="InParanoid" id="Q6IE75"/>
<dbReference type="OMA" id="CDTVNDE"/>
<dbReference type="OrthoDB" id="57349at9989"/>
<dbReference type="PhylomeDB" id="Q6IE75"/>
<dbReference type="TreeFam" id="TF329595"/>
<dbReference type="PRO" id="PR:Q6IE75"/>
<dbReference type="Proteomes" id="UP000002494">
    <property type="component" value="Chromosome 11"/>
</dbReference>
<dbReference type="Bgee" id="ENSRNOG00000001953">
    <property type="expression patterns" value="Expressed in stomach and 19 other cell types or tissues"/>
</dbReference>
<dbReference type="GO" id="GO:0031045">
    <property type="term" value="C:dense core granule"/>
    <property type="evidence" value="ECO:0000314"/>
    <property type="project" value="RGD"/>
</dbReference>
<dbReference type="GO" id="GO:0005783">
    <property type="term" value="C:endoplasmic reticulum"/>
    <property type="evidence" value="ECO:0007669"/>
    <property type="project" value="UniProtKB-SubCell"/>
</dbReference>
<dbReference type="GO" id="GO:0005768">
    <property type="term" value="C:endosome"/>
    <property type="evidence" value="ECO:0000318"/>
    <property type="project" value="GO_Central"/>
</dbReference>
<dbReference type="GO" id="GO:0005794">
    <property type="term" value="C:Golgi apparatus"/>
    <property type="evidence" value="ECO:0000250"/>
    <property type="project" value="UniProtKB"/>
</dbReference>
<dbReference type="GO" id="GO:0033162">
    <property type="term" value="C:melanosome membrane"/>
    <property type="evidence" value="ECO:0000266"/>
    <property type="project" value="RGD"/>
</dbReference>
<dbReference type="GO" id="GO:0005886">
    <property type="term" value="C:plasma membrane"/>
    <property type="evidence" value="ECO:0000250"/>
    <property type="project" value="UniProtKB"/>
</dbReference>
<dbReference type="GO" id="GO:0005802">
    <property type="term" value="C:trans-Golgi network"/>
    <property type="evidence" value="ECO:0000318"/>
    <property type="project" value="GO_Central"/>
</dbReference>
<dbReference type="GO" id="GO:0004190">
    <property type="term" value="F:aspartic-type endopeptidase activity"/>
    <property type="evidence" value="ECO:0000250"/>
    <property type="project" value="UniProtKB"/>
</dbReference>
<dbReference type="GO" id="GO:0008233">
    <property type="term" value="F:peptidase activity"/>
    <property type="evidence" value="ECO:0000266"/>
    <property type="project" value="RGD"/>
</dbReference>
<dbReference type="GO" id="GO:0050435">
    <property type="term" value="P:amyloid-beta metabolic process"/>
    <property type="evidence" value="ECO:0000318"/>
    <property type="project" value="GO_Central"/>
</dbReference>
<dbReference type="GO" id="GO:0048143">
    <property type="term" value="P:astrocyte activation"/>
    <property type="evidence" value="ECO:0000270"/>
    <property type="project" value="RGD"/>
</dbReference>
<dbReference type="GO" id="GO:0042593">
    <property type="term" value="P:glucose homeostasis"/>
    <property type="evidence" value="ECO:0000266"/>
    <property type="project" value="RGD"/>
</dbReference>
<dbReference type="GO" id="GO:0032438">
    <property type="term" value="P:melanosome organization"/>
    <property type="evidence" value="ECO:0000266"/>
    <property type="project" value="RGD"/>
</dbReference>
<dbReference type="GO" id="GO:0006509">
    <property type="term" value="P:membrane protein ectodomain proteolysis"/>
    <property type="evidence" value="ECO:0000250"/>
    <property type="project" value="UniProtKB"/>
</dbReference>
<dbReference type="GO" id="GO:0042985">
    <property type="term" value="P:negative regulation of amyloid precursor protein biosynthetic process"/>
    <property type="evidence" value="ECO:0000250"/>
    <property type="project" value="UniProtKB"/>
</dbReference>
<dbReference type="GO" id="GO:0016485">
    <property type="term" value="P:protein processing"/>
    <property type="evidence" value="ECO:0000266"/>
    <property type="project" value="RGD"/>
</dbReference>
<dbReference type="GO" id="GO:0140448">
    <property type="term" value="P:signaling receptor ligand precursor processing"/>
    <property type="evidence" value="ECO:0000266"/>
    <property type="project" value="RGD"/>
</dbReference>
<dbReference type="CDD" id="cd05473">
    <property type="entry name" value="beta_secretase_like"/>
    <property type="match status" value="1"/>
</dbReference>
<dbReference type="FunFam" id="2.40.70.10:FF:000003">
    <property type="entry name" value="Beta-secretase 1"/>
    <property type="match status" value="1"/>
</dbReference>
<dbReference type="FunFam" id="2.40.70.10:FF:000007">
    <property type="entry name" value="Beta-secretase 1"/>
    <property type="match status" value="1"/>
</dbReference>
<dbReference type="Gene3D" id="2.40.70.10">
    <property type="entry name" value="Acid Proteases"/>
    <property type="match status" value="2"/>
</dbReference>
<dbReference type="InterPro" id="IPR001461">
    <property type="entry name" value="Aspartic_peptidase_A1"/>
</dbReference>
<dbReference type="InterPro" id="IPR001969">
    <property type="entry name" value="Aspartic_peptidase_AS"/>
</dbReference>
<dbReference type="InterPro" id="IPR009119">
    <property type="entry name" value="BACE"/>
</dbReference>
<dbReference type="InterPro" id="IPR009121">
    <property type="entry name" value="BACE2"/>
</dbReference>
<dbReference type="InterPro" id="IPR033874">
    <property type="entry name" value="Memapsin-like"/>
</dbReference>
<dbReference type="InterPro" id="IPR033121">
    <property type="entry name" value="PEPTIDASE_A1"/>
</dbReference>
<dbReference type="InterPro" id="IPR021109">
    <property type="entry name" value="Peptidase_aspartic_dom_sf"/>
</dbReference>
<dbReference type="PANTHER" id="PTHR47965">
    <property type="entry name" value="ASPARTYL PROTEASE-RELATED"/>
    <property type="match status" value="1"/>
</dbReference>
<dbReference type="PANTHER" id="PTHR47965:SF40">
    <property type="entry name" value="BETA-SECRETASE 2"/>
    <property type="match status" value="1"/>
</dbReference>
<dbReference type="Pfam" id="PF00026">
    <property type="entry name" value="Asp"/>
    <property type="match status" value="1"/>
</dbReference>
<dbReference type="PRINTS" id="PR01817">
    <property type="entry name" value="BACE2"/>
</dbReference>
<dbReference type="PRINTS" id="PR01815">
    <property type="entry name" value="BACEFAMILY"/>
</dbReference>
<dbReference type="PRINTS" id="PR00792">
    <property type="entry name" value="PEPSIN"/>
</dbReference>
<dbReference type="SUPFAM" id="SSF50630">
    <property type="entry name" value="Acid proteases"/>
    <property type="match status" value="1"/>
</dbReference>
<dbReference type="PROSITE" id="PS00141">
    <property type="entry name" value="ASP_PROTEASE"/>
    <property type="match status" value="2"/>
</dbReference>
<dbReference type="PROSITE" id="PS51767">
    <property type="entry name" value="PEPTIDASE_A1"/>
    <property type="match status" value="1"/>
</dbReference>
<feature type="signal peptide" evidence="3">
    <location>
        <begin position="1"/>
        <end position="20"/>
    </location>
</feature>
<feature type="propeptide" id="PRO_0000383648" evidence="1">
    <location>
        <begin position="21"/>
        <end position="62"/>
    </location>
</feature>
<feature type="chain" id="PRO_0000383649" description="Beta-secretase 2">
    <location>
        <begin position="63"/>
        <end position="514"/>
    </location>
</feature>
<feature type="topological domain" description="Extracellular" evidence="3">
    <location>
        <begin position="21"/>
        <end position="469"/>
    </location>
</feature>
<feature type="transmembrane region" description="Helical" evidence="3">
    <location>
        <begin position="470"/>
        <end position="490"/>
    </location>
</feature>
<feature type="topological domain" description="Cytoplasmic" evidence="3">
    <location>
        <begin position="491"/>
        <end position="514"/>
    </location>
</feature>
<feature type="domain" description="Peptidase A1" evidence="4">
    <location>
        <begin position="88"/>
        <end position="425"/>
    </location>
</feature>
<feature type="active site" evidence="5">
    <location>
        <position position="106"/>
    </location>
</feature>
<feature type="active site" evidence="5">
    <location>
        <position position="299"/>
    </location>
</feature>
<feature type="glycosylation site" description="N-linked (GlcNAc...) asparagine" evidence="3">
    <location>
        <position position="166"/>
    </location>
</feature>
<feature type="glycosylation site" description="N-linked (GlcNAc...) asparagine" evidence="3">
    <location>
        <position position="362"/>
    </location>
</feature>
<feature type="disulfide bond" evidence="1">
    <location>
        <begin position="229"/>
        <end position="429"/>
    </location>
</feature>
<feature type="disulfide bond" evidence="1">
    <location>
        <begin position="288"/>
        <end position="453"/>
    </location>
</feature>
<feature type="disulfide bond" evidence="1">
    <location>
        <begin position="340"/>
        <end position="389"/>
    </location>
</feature>
<feature type="sequence conflict" description="In Ref. 1; AAI66597." evidence="6" ref="1">
    <original>K</original>
    <variation>R</variation>
    <location>
        <position position="188"/>
    </location>
</feature>
<gene>
    <name type="primary">Bace2</name>
</gene>
<sequence length="514" mass="55858">MGALLRALLLPLLAQWLLRAVPVLAPAPFTLPLQVAGAANHRASTVPGLGTPELPRADGLALALEPARATANFLAMVDNLQGDSGRGYYLEMLIGTPPQKVRILVDTGSSNFAVAGAPHSYIDTYFDSESSSTYHSKGFEVTVKYTQGSWTGFVGEDLVTIPKGFNSSFLVNIATIFESENFFLPGIKWNGILGLAYAALAKPSSSLETFFDSLVAQAKIPDIFSMQMCGAGLPVAGSGTNGGSLVLGGIEPSLYKGDIWYTPIKEEWYYQIEILKLEIGGQSLNLDCREYNADKAIVDSGTTLLRLPQKVFDAVVEAVARTSLIPEFSDGFWTGAQLACWTNSETPWAYFPKISIYLRDENASRSFRITILPQLYIQPMMGAGFNYECYRFGISSSTNALVIGATVMEGFYVVFDRAQRRVGFAVSPCAEIAGTTVSEISGPFSTEDIASNCVPAQALNEPILWIVSYALMSVCGAILLVLILLLLFPLHCRHAPRDPEVVNDESSLVRHRWK</sequence>
<reference key="1">
    <citation type="journal article" date="2004" name="Genome Res.">
        <title>The status, quality, and expansion of the NIH full-length cDNA project: the Mammalian Gene Collection (MGC).</title>
        <authorList>
            <consortium name="The MGC Project Team"/>
        </authorList>
    </citation>
    <scope>NUCLEOTIDE SEQUENCE [LARGE SCALE MRNA]</scope>
    <source>
        <tissue>Prostate</tissue>
    </source>
</reference>
<reference key="2">
    <citation type="journal article" date="2004" name="Genome Res.">
        <title>A genomic analysis of rat proteases and protease inhibitors.</title>
        <authorList>
            <person name="Puente X.S."/>
            <person name="Lopez-Otin C."/>
        </authorList>
    </citation>
    <scope>IDENTIFICATION</scope>
    <source>
        <strain>Sprague-Dawley</strain>
    </source>
</reference>
<accession>Q6IE75</accession>
<accession>B2GVB0</accession>
<protein>
    <recommendedName>
        <fullName>Beta-secretase 2</fullName>
        <ecNumber evidence="2">3.4.23.45</ecNumber>
    </recommendedName>
    <alternativeName>
        <fullName>Beta-site amyloid precursor protein cleaving enzyme 2</fullName>
        <shortName>Beta-site APP cleaving enzyme 2</shortName>
    </alternativeName>
    <alternativeName>
        <fullName>Memapsin-1</fullName>
    </alternativeName>
    <alternativeName>
        <fullName>Membrane-associated aspartic protease 1</fullName>
    </alternativeName>
    <alternativeName>
        <fullName>Theta-secretase</fullName>
    </alternativeName>
</protein>
<keyword id="KW-0064">Aspartyl protease</keyword>
<keyword id="KW-0068">Autocatalytic cleavage</keyword>
<keyword id="KW-1003">Cell membrane</keyword>
<keyword id="KW-1015">Disulfide bond</keyword>
<keyword id="KW-0256">Endoplasmic reticulum</keyword>
<keyword id="KW-0967">Endosome</keyword>
<keyword id="KW-0325">Glycoprotein</keyword>
<keyword id="KW-0333">Golgi apparatus</keyword>
<keyword id="KW-0378">Hydrolase</keyword>
<keyword id="KW-0472">Membrane</keyword>
<keyword id="KW-0645">Protease</keyword>
<keyword id="KW-1185">Reference proteome</keyword>
<keyword id="KW-0732">Signal</keyword>
<keyword id="KW-0812">Transmembrane</keyword>
<keyword id="KW-1133">Transmembrane helix</keyword>
<keyword id="KW-0865">Zymogen</keyword>
<proteinExistence type="evidence at transcript level"/>
<name>BACE2_RAT</name>